<name>YFE5_CLOPA</name>
<comment type="similarity">
    <text evidence="1">To M.jannaschii MJ0886 C-terminal region.</text>
</comment>
<reference key="1">
    <citation type="journal article" date="1993" name="Biochem. Biophys. Res. Commun.">
        <title>Cloning and expression in Escherichia coli of the gene encoding the [2Fe-2S] ferredoxin from Clostridium pasteurianum.</title>
        <authorList>
            <person name="Fujinaga J."/>
            <person name="Meyer J."/>
        </authorList>
    </citation>
    <scope>NUCLEOTIDE SEQUENCE [GENOMIC DNA]</scope>
    <source>
        <strain>ATCC 6013 / DSM 525 / NCIB 9486 / VKM B-1774 / W5</strain>
    </source>
</reference>
<reference key="2">
    <citation type="journal article" date="1993" name="Biochim. Biophys. Acta">
        <title>Cloning and sequencing of the gene encoding the [2Fe-2S] ferredoxin from Clostridium pasteurianum.</title>
        <authorList>
            <person name="Meyer J."/>
        </authorList>
    </citation>
    <scope>NUCLEOTIDE SEQUENCE [GENOMIC DNA]</scope>
    <source>
        <strain>ATCC 6013 / DSM 525 / NCIB 9486 / VKM B-1774 / W5</strain>
    </source>
</reference>
<sequence>ILLDEHIRLLGIDPYSIDGYSRECFSHLAVASTVARGGADLAIGSEKMGLQVKNIDFIPLQKERYELVIKKEDMNKPFFKVLMDIINSNNFKMELEGLGGYDLSETGKIVTEL</sequence>
<evidence type="ECO:0000305" key="1"/>
<proteinExistence type="predicted"/>
<dbReference type="EMBL" id="Z19005">
    <property type="protein sequence ID" value="CAA79491.1"/>
    <property type="molecule type" value="Genomic_DNA"/>
</dbReference>
<dbReference type="PIR" id="S34627">
    <property type="entry name" value="S34627"/>
</dbReference>
<dbReference type="InterPro" id="IPR024370">
    <property type="entry name" value="PBP_domain"/>
</dbReference>
<dbReference type="PANTHER" id="PTHR38431">
    <property type="entry name" value="BLL2305 PROTEIN"/>
    <property type="match status" value="1"/>
</dbReference>
<dbReference type="PANTHER" id="PTHR38431:SF1">
    <property type="entry name" value="BLL2305 PROTEIN"/>
    <property type="match status" value="1"/>
</dbReference>
<dbReference type="Pfam" id="PF12727">
    <property type="entry name" value="PBP_like"/>
    <property type="match status" value="1"/>
</dbReference>
<accession>Q04624</accession>
<organism>
    <name type="scientific">Clostridium pasteurianum</name>
    <dbReference type="NCBI Taxonomy" id="1501"/>
    <lineage>
        <taxon>Bacteria</taxon>
        <taxon>Bacillati</taxon>
        <taxon>Bacillota</taxon>
        <taxon>Clostridia</taxon>
        <taxon>Eubacteriales</taxon>
        <taxon>Clostridiaceae</taxon>
        <taxon>Clostridium</taxon>
    </lineage>
</organism>
<protein>
    <recommendedName>
        <fullName>Uncharacterized protein in ferredoxin 2Fe-2S gene 5'region</fullName>
    </recommendedName>
</protein>
<feature type="chain" id="PRO_0000171006" description="Uncharacterized protein in ferredoxin 2Fe-2S gene 5'region">
    <location>
        <begin position="1" status="less than"/>
        <end position="113"/>
    </location>
</feature>
<feature type="non-terminal residue">
    <location>
        <position position="1"/>
    </location>
</feature>